<dbReference type="EC" id="5.3.1.25"/>
<dbReference type="EMBL" id="AE005674">
    <property type="protein sequence ID" value="AAN44304.1"/>
    <property type="molecule type" value="Genomic_DNA"/>
</dbReference>
<dbReference type="EMBL" id="AE014073">
    <property type="protein sequence ID" value="AAP18129.1"/>
    <property type="molecule type" value="Genomic_DNA"/>
</dbReference>
<dbReference type="RefSeq" id="NP_708597.1">
    <property type="nucleotide sequence ID" value="NC_004337.2"/>
</dbReference>
<dbReference type="RefSeq" id="WP_000724153.1">
    <property type="nucleotide sequence ID" value="NZ_WPGW01000008.1"/>
</dbReference>
<dbReference type="SMR" id="P69923"/>
<dbReference type="STRING" id="198214.SF2816"/>
<dbReference type="DrugBank" id="DB03815">
    <property type="generic name" value="Fucitol"/>
</dbReference>
<dbReference type="PaxDb" id="198214-SF2816"/>
<dbReference type="GeneID" id="1027300"/>
<dbReference type="GeneID" id="75172886"/>
<dbReference type="KEGG" id="sfl:SF2816"/>
<dbReference type="KEGG" id="sfx:S3011"/>
<dbReference type="PATRIC" id="fig|198214.7.peg.3351"/>
<dbReference type="HOGENOM" id="CLU_033326_1_0_6"/>
<dbReference type="UniPathway" id="UPA00563">
    <property type="reaction ID" value="UER00624"/>
</dbReference>
<dbReference type="Proteomes" id="UP000001006">
    <property type="component" value="Chromosome"/>
</dbReference>
<dbReference type="Proteomes" id="UP000002673">
    <property type="component" value="Chromosome"/>
</dbReference>
<dbReference type="GO" id="GO:0005737">
    <property type="term" value="C:cytoplasm"/>
    <property type="evidence" value="ECO:0007669"/>
    <property type="project" value="UniProtKB-SubCell"/>
</dbReference>
<dbReference type="GO" id="GO:0008790">
    <property type="term" value="F:arabinose isomerase activity"/>
    <property type="evidence" value="ECO:0007669"/>
    <property type="project" value="TreeGrafter"/>
</dbReference>
<dbReference type="GO" id="GO:0008736">
    <property type="term" value="F:L-fucose isomerase activity"/>
    <property type="evidence" value="ECO:0007669"/>
    <property type="project" value="UniProtKB-UniRule"/>
</dbReference>
<dbReference type="GO" id="GO:0030145">
    <property type="term" value="F:manganese ion binding"/>
    <property type="evidence" value="ECO:0007669"/>
    <property type="project" value="UniProtKB-UniRule"/>
</dbReference>
<dbReference type="GO" id="GO:0019571">
    <property type="term" value="P:D-arabinose catabolic process"/>
    <property type="evidence" value="ECO:0007669"/>
    <property type="project" value="TreeGrafter"/>
</dbReference>
<dbReference type="GO" id="GO:0042355">
    <property type="term" value="P:L-fucose catabolic process"/>
    <property type="evidence" value="ECO:0007669"/>
    <property type="project" value="UniProtKB-UniRule"/>
</dbReference>
<dbReference type="CDD" id="cd03556">
    <property type="entry name" value="L-fucose_isomerase"/>
    <property type="match status" value="1"/>
</dbReference>
<dbReference type="FunFam" id="3.20.14.10:FF:000001">
    <property type="entry name" value="L-fucose isomerase"/>
    <property type="match status" value="1"/>
</dbReference>
<dbReference type="FunFam" id="3.40.275.10:FF:000001">
    <property type="entry name" value="L-fucose isomerase"/>
    <property type="match status" value="1"/>
</dbReference>
<dbReference type="FunFam" id="3.40.50.1070:FF:000001">
    <property type="entry name" value="L-fucose isomerase"/>
    <property type="match status" value="1"/>
</dbReference>
<dbReference type="Gene3D" id="3.40.50.1070">
    <property type="match status" value="1"/>
</dbReference>
<dbReference type="Gene3D" id="3.40.275.10">
    <property type="entry name" value="L-fucose Isomerase, Chain A, domain 2"/>
    <property type="match status" value="1"/>
</dbReference>
<dbReference type="Gene3D" id="3.20.14.10">
    <property type="entry name" value="L-fucose/L-arabinose isomerase, C-terminal"/>
    <property type="match status" value="1"/>
</dbReference>
<dbReference type="HAMAP" id="MF_01254">
    <property type="entry name" value="Fucose_iso"/>
    <property type="match status" value="1"/>
</dbReference>
<dbReference type="InterPro" id="IPR004216">
    <property type="entry name" value="Fuc/Ara_isomerase_C"/>
</dbReference>
<dbReference type="InterPro" id="IPR038393">
    <property type="entry name" value="Fuc_iso_dom3_sf"/>
</dbReference>
<dbReference type="InterPro" id="IPR015888">
    <property type="entry name" value="Fuc_isomerase_C"/>
</dbReference>
<dbReference type="InterPro" id="IPR038391">
    <property type="entry name" value="Fucose_iso_dom1_sf"/>
</dbReference>
<dbReference type="InterPro" id="IPR012888">
    <property type="entry name" value="Fucose_iso_N1"/>
</dbReference>
<dbReference type="InterPro" id="IPR005763">
    <property type="entry name" value="Fucose_isomerase"/>
</dbReference>
<dbReference type="InterPro" id="IPR038392">
    <property type="entry name" value="Fucose_isomerase_dom2_sf"/>
</dbReference>
<dbReference type="InterPro" id="IPR009015">
    <property type="entry name" value="Fucose_isomerase_N/cen_sf"/>
</dbReference>
<dbReference type="InterPro" id="IPR012889">
    <property type="entry name" value="Fucose_isomerase_N2"/>
</dbReference>
<dbReference type="NCBIfam" id="TIGR01089">
    <property type="entry name" value="fucI"/>
    <property type="match status" value="1"/>
</dbReference>
<dbReference type="NCBIfam" id="NF008220">
    <property type="entry name" value="PRK10991.1"/>
    <property type="match status" value="1"/>
</dbReference>
<dbReference type="PANTHER" id="PTHR37840">
    <property type="entry name" value="L-FUCOSE ISOMERASE"/>
    <property type="match status" value="1"/>
</dbReference>
<dbReference type="PANTHER" id="PTHR37840:SF1">
    <property type="entry name" value="L-FUCOSE ISOMERASE"/>
    <property type="match status" value="1"/>
</dbReference>
<dbReference type="Pfam" id="PF02952">
    <property type="entry name" value="Fucose_iso_C"/>
    <property type="match status" value="1"/>
</dbReference>
<dbReference type="Pfam" id="PF07881">
    <property type="entry name" value="Fucose_iso_N1"/>
    <property type="match status" value="1"/>
</dbReference>
<dbReference type="Pfam" id="PF07882">
    <property type="entry name" value="Fucose_iso_N2"/>
    <property type="match status" value="1"/>
</dbReference>
<dbReference type="SUPFAM" id="SSF50443">
    <property type="entry name" value="FucI/AraA C-terminal domain-like"/>
    <property type="match status" value="1"/>
</dbReference>
<dbReference type="SUPFAM" id="SSF53743">
    <property type="entry name" value="FucI/AraA N-terminal and middle domains"/>
    <property type="match status" value="1"/>
</dbReference>
<keyword id="KW-0119">Carbohydrate metabolism</keyword>
<keyword id="KW-0963">Cytoplasm</keyword>
<keyword id="KW-0294">Fucose metabolism</keyword>
<keyword id="KW-0413">Isomerase</keyword>
<keyword id="KW-0464">Manganese</keyword>
<keyword id="KW-0479">Metal-binding</keyword>
<keyword id="KW-1185">Reference proteome</keyword>
<reference key="1">
    <citation type="journal article" date="2002" name="Nucleic Acids Res.">
        <title>Genome sequence of Shigella flexneri 2a: insights into pathogenicity through comparison with genomes of Escherichia coli K12 and O157.</title>
        <authorList>
            <person name="Jin Q."/>
            <person name="Yuan Z."/>
            <person name="Xu J."/>
            <person name="Wang Y."/>
            <person name="Shen Y."/>
            <person name="Lu W."/>
            <person name="Wang J."/>
            <person name="Liu H."/>
            <person name="Yang J."/>
            <person name="Yang F."/>
            <person name="Zhang X."/>
            <person name="Zhang J."/>
            <person name="Yang G."/>
            <person name="Wu H."/>
            <person name="Qu D."/>
            <person name="Dong J."/>
            <person name="Sun L."/>
            <person name="Xue Y."/>
            <person name="Zhao A."/>
            <person name="Gao Y."/>
            <person name="Zhu J."/>
            <person name="Kan B."/>
            <person name="Ding K."/>
            <person name="Chen S."/>
            <person name="Cheng H."/>
            <person name="Yao Z."/>
            <person name="He B."/>
            <person name="Chen R."/>
            <person name="Ma D."/>
            <person name="Qiang B."/>
            <person name="Wen Y."/>
            <person name="Hou Y."/>
            <person name="Yu J."/>
        </authorList>
    </citation>
    <scope>NUCLEOTIDE SEQUENCE [LARGE SCALE GENOMIC DNA]</scope>
    <source>
        <strain>301 / Serotype 2a</strain>
    </source>
</reference>
<reference key="2">
    <citation type="journal article" date="2003" name="Infect. Immun.">
        <title>Complete genome sequence and comparative genomics of Shigella flexneri serotype 2a strain 2457T.</title>
        <authorList>
            <person name="Wei J."/>
            <person name="Goldberg M.B."/>
            <person name="Burland V."/>
            <person name="Venkatesan M.M."/>
            <person name="Deng W."/>
            <person name="Fournier G."/>
            <person name="Mayhew G.F."/>
            <person name="Plunkett G. III"/>
            <person name="Rose D.J."/>
            <person name="Darling A."/>
            <person name="Mau B."/>
            <person name="Perna N.T."/>
            <person name="Payne S.M."/>
            <person name="Runyen-Janecky L.J."/>
            <person name="Zhou S."/>
            <person name="Schwartz D.C."/>
            <person name="Blattner F.R."/>
        </authorList>
    </citation>
    <scope>NUCLEOTIDE SEQUENCE [LARGE SCALE GENOMIC DNA]</scope>
    <source>
        <strain>ATCC 700930 / 2457T / Serotype 2a</strain>
    </source>
</reference>
<proteinExistence type="inferred from homology"/>
<comment type="function">
    <text evidence="1">Converts the aldose L-fucose into the corresponding ketose L-fuculose.</text>
</comment>
<comment type="catalytic activity">
    <reaction>
        <text>L-fucose = L-fuculose</text>
        <dbReference type="Rhea" id="RHEA:17233"/>
        <dbReference type="ChEBI" id="CHEBI:2181"/>
        <dbReference type="ChEBI" id="CHEBI:17617"/>
        <dbReference type="EC" id="5.3.1.25"/>
    </reaction>
</comment>
<comment type="cofactor">
    <cofactor evidence="1">
        <name>Mn(2+)</name>
        <dbReference type="ChEBI" id="CHEBI:29035"/>
    </cofactor>
</comment>
<comment type="pathway">
    <text>Carbohydrate degradation; L-fucose degradation; L-lactaldehyde and glycerone phosphate from L-fucose: step 1/3.</text>
</comment>
<comment type="subunit">
    <text evidence="1">Homohexamer.</text>
</comment>
<comment type="subcellular location">
    <subcellularLocation>
        <location evidence="1">Cytoplasm</location>
    </subcellularLocation>
</comment>
<comment type="similarity">
    <text evidence="2">Belongs to the L-fucose isomerase family.</text>
</comment>
<accession>P69923</accession>
<accession>P11552</accession>
<evidence type="ECO:0000250" key="1"/>
<evidence type="ECO:0000305" key="2"/>
<feature type="chain" id="PRO_0000204151" description="L-fucose isomerase">
    <location>
        <begin position="1"/>
        <end position="591"/>
    </location>
</feature>
<feature type="active site" description="Proton acceptor" evidence="1">
    <location>
        <position position="337"/>
    </location>
</feature>
<feature type="active site" description="Proton acceptor" evidence="1">
    <location>
        <position position="361"/>
    </location>
</feature>
<feature type="binding site" evidence="1">
    <location>
        <position position="337"/>
    </location>
    <ligand>
        <name>Mn(2+)</name>
        <dbReference type="ChEBI" id="CHEBI:29035"/>
    </ligand>
</feature>
<feature type="binding site" evidence="1">
    <location>
        <position position="361"/>
    </location>
    <ligand>
        <name>Mn(2+)</name>
        <dbReference type="ChEBI" id="CHEBI:29035"/>
    </ligand>
</feature>
<feature type="binding site" evidence="1">
    <location>
        <position position="528"/>
    </location>
    <ligand>
        <name>Mn(2+)</name>
        <dbReference type="ChEBI" id="CHEBI:29035"/>
    </ligand>
</feature>
<gene>
    <name type="primary">fucI</name>
    <name type="ordered locus">SF2816</name>
    <name type="ordered locus">S3011</name>
</gene>
<organism>
    <name type="scientific">Shigella flexneri</name>
    <dbReference type="NCBI Taxonomy" id="623"/>
    <lineage>
        <taxon>Bacteria</taxon>
        <taxon>Pseudomonadati</taxon>
        <taxon>Pseudomonadota</taxon>
        <taxon>Gammaproteobacteria</taxon>
        <taxon>Enterobacterales</taxon>
        <taxon>Enterobacteriaceae</taxon>
        <taxon>Shigella</taxon>
    </lineage>
</organism>
<name>FUCI_SHIFL</name>
<sequence length="591" mass="64977">MKKISLPKIGIRPVIDGRRMGVRESLEEQTMNMAKATAALLTEKLRHACGAAVECVISDTCIAGMAEAAACEEKFSSQNVGLTITVTPCWCYGSETIDMDPTRPKAIWGFNGTERPGAVYLAAALAAHSQKGIPAFSIYGHDVQDADDTSIPADVEEKLLRFARAGLAVASMKGKSYLSLGGVSMGIAGSIVDHNFFESWLGMKVQAVDMTELRRRIDQKIYDEAELEMALAWADKNFRYGEDENNKQYQRNAEQSRAVLRESLLMAMCIRDMMQGNSKLADIGRVEESLGYNAIAAGFQGQRHWTDQYPNGDTAEAILNSSFDWNGVREPFVVATENDSLNGVAMLMGHQLTGTAQVFADVRTYWSPEAIERVTGHKLDGLAEHGIIHLINSGSAALDGSCKQRDSEGNPTMKPHWEISQQEADACLAATEWCPAIHEYFRGGGYSSRFLTEGGVPFTMTRVNIIKGLGPVLQIAEGWSVELPKDVHDILNKRTNSTWPTTWFAPRLTGKGPFTDVYSVMANWGANHGVLTIGHVGADFITLASMLRIPVCMHNVEETKVYRPSAWAAHGMDIEGQDYRACQNYGPLYKR</sequence>
<protein>
    <recommendedName>
        <fullName>L-fucose isomerase</fullName>
        <ecNumber>5.3.1.25</ecNumber>
    </recommendedName>
    <alternativeName>
        <fullName>6-deoxy-L-galactose isomerase</fullName>
    </alternativeName>
    <alternativeName>
        <fullName>FucIase</fullName>
    </alternativeName>
</protein>